<protein>
    <recommendedName>
        <fullName>2-oxoadipate dehydrogenase complex component E1</fullName>
        <shortName evidence="16 19">E1a</shortName>
        <shortName>OADC-E1</shortName>
        <shortName>OADH-E1</shortName>
        <ecNumber evidence="12 14 21 25">1.2.4.-</ecNumber>
    </recommendedName>
    <alternativeName>
        <fullName>2-oxoadipate dehydrogenase, mitochondrial</fullName>
    </alternativeName>
    <alternativeName>
        <fullName>Alpha-ketoadipate dehydrogenase</fullName>
        <shortName>Alpha-KADH-E1</shortName>
    </alternativeName>
    <alternativeName>
        <fullName>Dehydrogenase E1 and transketolase domain-containing protein 1</fullName>
    </alternativeName>
    <alternativeName>
        <fullName>Probable 2-oxoglutarate dehydrogenase E1 component DHKTD1, mitochondrial</fullName>
    </alternativeName>
</protein>
<feature type="transit peptide" description="Mitochondrion" evidence="2">
    <location>
        <begin position="1"/>
        <end status="unknown"/>
    </location>
</feature>
<feature type="chain" id="PRO_0000307936" description="2-oxoadipate dehydrogenase complex component E1">
    <location>
        <begin status="unknown"/>
        <end position="919"/>
    </location>
</feature>
<feature type="region of interest" description="Disordered" evidence="3">
    <location>
        <begin position="299"/>
        <end position="320"/>
    </location>
</feature>
<feature type="modified residue" description="N6-succinyllysine" evidence="1">
    <location>
        <position position="183"/>
    </location>
</feature>
<feature type="modified residue" description="N6-succinyllysine" evidence="1">
    <location>
        <position position="188"/>
    </location>
</feature>
<feature type="modified residue" description="N6-succinyllysine" evidence="1">
    <location>
        <position position="800"/>
    </location>
</feature>
<feature type="modified residue" description="N6-succinyllysine" evidence="1">
    <location>
        <position position="818"/>
    </location>
</feature>
<feature type="sequence variant" id="VAR_036715" description="In dbSNP:rs1279138." evidence="4 5">
    <original>F</original>
    <variation>L</variation>
    <location>
        <position position="20"/>
    </location>
</feature>
<feature type="sequence variant" id="VAR_085786" description="In AAKAD; uncertain significance; requires 2 nucleotide substitutions; dbSNP:rs2131357438." evidence="9">
    <original>L</original>
    <variation>G</variation>
    <location>
        <position position="234"/>
    </location>
</feature>
<feature type="sequence variant" id="VAR_036716" description="In dbSNP:rs3740015." evidence="4 5">
    <original>Y</original>
    <variation>D</variation>
    <location>
        <position position="272"/>
    </location>
</feature>
<feature type="sequence variant" id="VAR_085787" description="In AAKAD; uncertain significance; dbSNP:rs200922071." evidence="10">
    <original>Q</original>
    <variation>H</variation>
    <location>
        <position position="305"/>
    </location>
</feature>
<feature type="sequence variant" id="VAR_036717" description="In dbSNP:rs17849603." evidence="5">
    <original>R</original>
    <variation>L</variation>
    <location>
        <position position="308"/>
    </location>
</feature>
<feature type="sequence variant" id="VAR_036718" description="In dbSNP:rs34716552.">
    <original>N</original>
    <variation>D</variation>
    <location>
        <position position="350"/>
    </location>
</feature>
<feature type="sequence variant" id="VAR_085788" description="In AAKAD." evidence="9">
    <location>
        <begin position="437"/>
        <end position="919"/>
    </location>
</feature>
<feature type="sequence variant" id="VAR_085789" description="In AAKAD; uncertain significance; dbSNP:rs142068634." evidence="9">
    <original>R</original>
    <variation>Q</variation>
    <location>
        <position position="455"/>
    </location>
</feature>
<feature type="sequence variant" id="VAR_036719" description="In dbSNP:rs2062988." evidence="4 5 6">
    <original>I</original>
    <variation>M</variation>
    <location>
        <position position="607"/>
    </location>
</feature>
<feature type="sequence variant" id="VAR_085790" description="In AAKAD; decreased interaction with DLST; dbSNP:rs200788729." evidence="10 13 15">
    <original>R</original>
    <variation>C</variation>
    <location>
        <position position="715"/>
    </location>
</feature>
<feature type="sequence variant" id="VAR_069585" description="In AAKAD; affects the overall activity of OADHC complex; affects assembly with DLST leading to impaired channeling of reaction intermediates; dbSNP:rs117225135." evidence="7 10 13">
    <original>G</original>
    <variation>R</variation>
    <location>
        <position position="729"/>
    </location>
</feature>
<feature type="sequence variant" id="VAR_085791" description="In AAKAD; uncertain significance; thermally more labile than wild-type protein; dbSNP:rs200355418." evidence="9">
    <original>P</original>
    <variation>L</variation>
    <location>
        <position position="773"/>
    </location>
</feature>
<feature type="sequence variant" id="VAR_085792" description="In AAKAD; uncertain significance; dbSNP:rs1172299330." evidence="9">
    <original>S</original>
    <variation>P</variation>
    <location>
        <position position="777"/>
    </location>
</feature>
<feature type="helix" evidence="27">
    <location>
        <begin position="54"/>
        <end position="66"/>
    </location>
</feature>
<feature type="helix" evidence="27">
    <location>
        <begin position="67"/>
        <end position="70"/>
    </location>
</feature>
<feature type="helix" evidence="27">
    <location>
        <begin position="87"/>
        <end position="93"/>
    </location>
</feature>
<feature type="turn" evidence="27">
    <location>
        <begin position="103"/>
        <end position="105"/>
    </location>
</feature>
<feature type="strand" evidence="27">
    <location>
        <begin position="111"/>
        <end position="113"/>
    </location>
</feature>
<feature type="helix" evidence="27">
    <location>
        <begin position="115"/>
        <end position="126"/>
    </location>
</feature>
<feature type="strand" evidence="27">
    <location>
        <begin position="127"/>
        <end position="133"/>
    </location>
</feature>
<feature type="helix" evidence="27">
    <location>
        <begin position="140"/>
        <end position="155"/>
    </location>
</feature>
<feature type="helix" evidence="27">
    <location>
        <begin position="160"/>
        <end position="183"/>
    </location>
</feature>
<feature type="turn" evidence="26">
    <location>
        <begin position="184"/>
        <end position="186"/>
    </location>
</feature>
<feature type="helix" evidence="27">
    <location>
        <begin position="198"/>
        <end position="212"/>
    </location>
</feature>
<feature type="strand" evidence="27">
    <location>
        <begin position="216"/>
        <end position="220"/>
    </location>
</feature>
<feature type="helix" evidence="27">
    <location>
        <begin position="226"/>
        <end position="232"/>
    </location>
</feature>
<feature type="helix" evidence="27">
    <location>
        <begin position="238"/>
        <end position="245"/>
    </location>
</feature>
<feature type="helix" evidence="27">
    <location>
        <begin position="262"/>
        <end position="264"/>
    </location>
</feature>
<feature type="strand" evidence="27">
    <location>
        <begin position="268"/>
        <end position="283"/>
    </location>
</feature>
<feature type="turn" evidence="27">
    <location>
        <begin position="290"/>
        <end position="292"/>
    </location>
</feature>
<feature type="helix" evidence="27">
    <location>
        <begin position="293"/>
        <end position="307"/>
    </location>
</feature>
<feature type="helix" evidence="27">
    <location>
        <begin position="311"/>
        <end position="313"/>
    </location>
</feature>
<feature type="strand" evidence="27">
    <location>
        <begin position="323"/>
        <end position="332"/>
    </location>
</feature>
<feature type="helix" evidence="27">
    <location>
        <begin position="333"/>
        <end position="338"/>
    </location>
</feature>
<feature type="helix" evidence="27">
    <location>
        <begin position="341"/>
        <end position="348"/>
    </location>
</feature>
<feature type="turn" evidence="27">
    <location>
        <begin position="352"/>
        <end position="354"/>
    </location>
</feature>
<feature type="strand" evidence="27">
    <location>
        <begin position="359"/>
        <end position="365"/>
    </location>
</feature>
<feature type="strand" evidence="27">
    <location>
        <begin position="367"/>
        <end position="369"/>
    </location>
</feature>
<feature type="helix" evidence="27">
    <location>
        <begin position="374"/>
        <end position="376"/>
    </location>
</feature>
<feature type="strand" evidence="27">
    <location>
        <begin position="379"/>
        <end position="381"/>
    </location>
</feature>
<feature type="helix" evidence="27">
    <location>
        <begin position="383"/>
        <end position="390"/>
    </location>
</feature>
<feature type="strand" evidence="27">
    <location>
        <begin position="393"/>
        <end position="398"/>
    </location>
</feature>
<feature type="helix" evidence="27">
    <location>
        <begin position="402"/>
        <end position="419"/>
    </location>
</feature>
<feature type="strand" evidence="27">
    <location>
        <begin position="423"/>
        <end position="428"/>
    </location>
</feature>
<feature type="helix" evidence="27">
    <location>
        <begin position="441"/>
        <end position="443"/>
    </location>
</feature>
<feature type="helix" evidence="27">
    <location>
        <begin position="446"/>
        <end position="454"/>
    </location>
</feature>
<feature type="helix" evidence="27">
    <location>
        <begin position="458"/>
        <end position="468"/>
    </location>
</feature>
<feature type="helix" evidence="27">
    <location>
        <begin position="474"/>
        <end position="493"/>
    </location>
</feature>
<feature type="turn" evidence="27">
    <location>
        <begin position="494"/>
        <end position="496"/>
    </location>
</feature>
<feature type="helix" evidence="27">
    <location>
        <begin position="528"/>
        <end position="537"/>
    </location>
</feature>
<feature type="strand" evidence="26">
    <location>
        <begin position="543"/>
        <end position="545"/>
    </location>
</feature>
<feature type="helix" evidence="27">
    <location>
        <begin position="549"/>
        <end position="553"/>
    </location>
</feature>
<feature type="helix" evidence="27">
    <location>
        <begin position="555"/>
        <end position="565"/>
    </location>
</feature>
<feature type="strand" evidence="27">
    <location>
        <begin position="567"/>
        <end position="569"/>
    </location>
</feature>
<feature type="helix" evidence="27">
    <location>
        <begin position="571"/>
        <end position="584"/>
    </location>
</feature>
<feature type="strand" evidence="27">
    <location>
        <begin position="588"/>
        <end position="593"/>
    </location>
</feature>
<feature type="turn" evidence="27">
    <location>
        <begin position="594"/>
        <end position="598"/>
    </location>
</feature>
<feature type="strand" evidence="27">
    <location>
        <begin position="606"/>
        <end position="609"/>
    </location>
</feature>
<feature type="turn" evidence="27">
    <location>
        <begin position="611"/>
        <end position="613"/>
    </location>
</feature>
<feature type="helix" evidence="27">
    <location>
        <begin position="619"/>
        <end position="622"/>
    </location>
</feature>
<feature type="strand" evidence="27">
    <location>
        <begin position="631"/>
        <end position="635"/>
    </location>
</feature>
<feature type="helix" evidence="27">
    <location>
        <begin position="641"/>
        <end position="653"/>
    </location>
</feature>
<feature type="strand" evidence="27">
    <location>
        <begin position="657"/>
        <end position="662"/>
    </location>
</feature>
<feature type="helix" evidence="27">
    <location>
        <begin position="666"/>
        <end position="672"/>
    </location>
</feature>
<feature type="helix" evidence="27">
    <location>
        <begin position="673"/>
        <end position="678"/>
    </location>
</feature>
<feature type="turn" evidence="27">
    <location>
        <begin position="679"/>
        <end position="682"/>
    </location>
</feature>
<feature type="helix" evidence="27">
    <location>
        <begin position="683"/>
        <end position="687"/>
    </location>
</feature>
<feature type="strand" evidence="27">
    <location>
        <begin position="694"/>
        <end position="698"/>
    </location>
</feature>
<feature type="strand" evidence="27">
    <location>
        <begin position="702"/>
        <end position="704"/>
    </location>
</feature>
<feature type="helix" evidence="27">
    <location>
        <begin position="713"/>
        <end position="719"/>
    </location>
</feature>
<feature type="strand" evidence="27">
    <location>
        <begin position="735"/>
        <end position="737"/>
    </location>
</feature>
<feature type="helix" evidence="27">
    <location>
        <begin position="742"/>
        <end position="754"/>
    </location>
</feature>
<feature type="strand" evidence="27">
    <location>
        <begin position="755"/>
        <end position="757"/>
    </location>
</feature>
<feature type="strand" evidence="27">
    <location>
        <begin position="761"/>
        <end position="765"/>
    </location>
</feature>
<feature type="helix" evidence="27">
    <location>
        <begin position="768"/>
        <end position="770"/>
    </location>
</feature>
<feature type="helix" evidence="27">
    <location>
        <begin position="779"/>
        <end position="782"/>
    </location>
</feature>
<feature type="strand" evidence="27">
    <location>
        <begin position="790"/>
        <end position="792"/>
    </location>
</feature>
<feature type="helix" evidence="27">
    <location>
        <begin position="799"/>
        <end position="801"/>
    </location>
</feature>
<feature type="strand" evidence="27">
    <location>
        <begin position="804"/>
        <end position="808"/>
    </location>
</feature>
<feature type="helix" evidence="27">
    <location>
        <begin position="812"/>
        <end position="821"/>
    </location>
</feature>
<feature type="helix" evidence="27">
    <location>
        <begin position="822"/>
        <end position="829"/>
    </location>
</feature>
<feature type="strand" evidence="27">
    <location>
        <begin position="830"/>
        <end position="835"/>
    </location>
</feature>
<feature type="strand" evidence="27">
    <location>
        <begin position="837"/>
        <end position="840"/>
    </location>
</feature>
<feature type="helix" evidence="27">
    <location>
        <begin position="843"/>
        <end position="850"/>
    </location>
</feature>
<feature type="helix" evidence="27">
    <location>
        <begin position="851"/>
        <end position="853"/>
    </location>
</feature>
<feature type="strand" evidence="27">
    <location>
        <begin position="858"/>
        <end position="866"/>
    </location>
</feature>
<feature type="helix" evidence="27">
    <location>
        <begin position="872"/>
        <end position="883"/>
    </location>
</feature>
<feature type="strand" evidence="27">
    <location>
        <begin position="888"/>
        <end position="892"/>
    </location>
</feature>
<feature type="strand" evidence="27">
    <location>
        <begin position="896"/>
        <end position="899"/>
    </location>
</feature>
<feature type="helix" evidence="27">
    <location>
        <begin position="903"/>
        <end position="917"/>
    </location>
</feature>
<sequence>MASATAAAARRGLGRALPLFWRGYQTERGVYGYRPRKPESREPQGALERPPVDHGLARLVTVYCEHGHKAAKINPLFTGQALLENVPEIQALVQTLQGPFHTAGLLNMGKEEASLEEVLVYLNQIYCGQISIETSQLQSQDEKDWFAKRFEELQKETFTTEERKHLSKLMLESQEFDHFLATKFSTVKRYGGEGAESMMGFFHELLKMSAYSGITDVIIGMPHRGRLNLLTGLLQFPPELMFRKMRGLSEFPENFSATGDVLSHLTSSVDLYFGAHHPLHVTMLPNPSHLEAVNPVAVGKTRGRQQSRQDGDYSPDNSAQPGDRVICLQVHGDASFCGQGIVPETFTLSNLPHFRIGGSVHLIVNNQLGYTTPAERGRSSLYCSDIGKLVGCAIIHVNGDSPEEVVRATRLAFEYQRQFRKDVIIDLLCYRQWGHNELDEPFYTNPIMYKIIRARKSIPDTYAEHLIAGGLMTQEEVSEIKSSYYAKLNDHLNNMAHYRPPALNLQAHWQGLAQPEAQITTWSTGVPLDLLRFVGMKSVEVPRELQMHSHLLKTHVQSRMEKMMDGIKLDWATAEALALGSLLAQGFNVRLSGQDVGRGTFSQRHAIVVCQETDDTYIPLNHMDPNQKGFLEVSNSPLSEEAVLGFEYGMSIESPKLLPLWEAQFGDFFNGAQIIFDTFISGGEAKWLLQSGIVILLPHGYDGAGPDHSSCRIERFLQMCDSAEEGVDGDTVNMFVVHPTTPAQYFHLLRRQMVRNFRKPLIVASPKMLLRLPAAVSTLQEMAPGTTFNPVIGDSSVDPKKVKTLVFCSGKHFYSLVKQRESLGAKKHDFAIIRVEELCPFPLDSLQQEMSKYKHVKDHIWSQEEPQNMGPWSFVSPRFEKQLACKLRLVGRPPLPVPAVGIGTVHLHQHEDILAKTFA</sequence>
<name>DHTK1_HUMAN</name>
<gene>
    <name type="primary">DHTKD1</name>
    <name type="synonym">KIAA1630</name>
</gene>
<accession>Q96HY7</accession>
<accession>Q68CU5</accession>
<accession>Q9BUM8</accession>
<accession>Q9HCE2</accession>
<keyword id="KW-0002">3D-structure</keyword>
<keyword id="KW-0144">Charcot-Marie-Tooth disease</keyword>
<keyword id="KW-0225">Disease variant</keyword>
<keyword id="KW-0324">Glycolysis</keyword>
<keyword id="KW-0496">Mitochondrion</keyword>
<keyword id="KW-0523">Neurodegeneration</keyword>
<keyword id="KW-0622">Neuropathy</keyword>
<keyword id="KW-0560">Oxidoreductase</keyword>
<keyword id="KW-1267">Proteomics identification</keyword>
<keyword id="KW-1185">Reference proteome</keyword>
<keyword id="KW-0786">Thiamine pyrophosphate</keyword>
<keyword id="KW-0809">Transit peptide</keyword>
<comment type="function">
    <text evidence="11 12 13 14 15 21 22 23 24 25">2-oxoadipate dehydrogenase (E1a) component of the 2-oxoadipate dehydrogenase complex (OADHC) (PubMed:29191460, PubMed:29752936, PubMed:32303640, PubMed:32633484, PubMed:32695416). Participates in the first step, rate limiting for the overall conversion of 2-oxoadipate (alpha-ketoadipate) to glutaryl-CoA and CO(2) catalyzed by the whole OADHC (PubMed:29191460, PubMed:32695416). Catalyzes the irreversible decarboxylation of 2-oxoadipate via the thiamine diphosphate (ThDP) cofactor and subsequent transfer of the decarboxylated acyl intermediate on an oxidized dihydrolipoyl group that is covalently amidated to the E2 enzyme (dihydrolipoyllysine-residue succinyltransferase or DLST) (Probable) (PubMed:29752936, PubMed:32303640, PubMed:32633484). Can catalyze the decarboxylation of 2-oxoglutarate in vitro, but at a much lower rate than 2-oxoadipate (PubMed:29191460, PubMed:29752936, PubMed:32633484, PubMed:32695416). Responsible for the last step of L-lysine, L-hydroxylysine and L-tryptophan catabolism with the common product being 2-oxoadipate (Probable).</text>
</comment>
<comment type="catalytic activity">
    <reaction evidence="12 14 21 25">
        <text>N(6)-[(R)-lipoyl]-L-lysyl-[protein] + 2-oxoadipate + H(+) = N(6)-[(R)-S(8)-glutaryldihydrolipoyl]-L-lysyl-[protein] + CO2</text>
        <dbReference type="Rhea" id="RHEA:69576"/>
        <dbReference type="Rhea" id="RHEA-COMP:10474"/>
        <dbReference type="Rhea" id="RHEA-COMP:20093"/>
        <dbReference type="ChEBI" id="CHEBI:15378"/>
        <dbReference type="ChEBI" id="CHEBI:16526"/>
        <dbReference type="ChEBI" id="CHEBI:57499"/>
        <dbReference type="ChEBI" id="CHEBI:83099"/>
        <dbReference type="ChEBI" id="CHEBI:184385"/>
    </reaction>
    <physiologicalReaction direction="left-to-right" evidence="21 22 24 25">
        <dbReference type="Rhea" id="RHEA:69577"/>
    </physiologicalReaction>
</comment>
<comment type="cofactor">
    <cofactor evidence="15">
        <name>thiamine diphosphate</name>
        <dbReference type="ChEBI" id="CHEBI:58937"/>
    </cofactor>
</comment>
<comment type="biophysicochemical properties">
    <kinetics>
        <KM evidence="11 12">0.015 mM for 2-oxoadipate</KM>
        <KM evidence="11">0.25 mM for 2-oxoglutarate</KM>
        <KM evidence="15">0.2 mM for 2-oxoglutarate</KM>
        <KM evidence="13">0.012 mM for 2-oxoadipate</KM>
        <Vmax evidence="15">14.2 umol/min/mg enzyme using 2-oxoglutarate as substrate</Vmax>
    </kinetics>
</comment>
<comment type="pathway">
    <text evidence="21 22 23 24 25">Amino-acid degradation.</text>
</comment>
<comment type="subunit">
    <text evidence="15 22 24">The 2-oxoadipate dehydrogenase complex is composed of OADH (2-oxoadipate dehydrogenase; E1a), DLST (dihydrolipoamide succinyltransferase; E2) and DLD (dihydrolipoamide dehydrogenase; E3). E1a functional unit is a dimer. Interacts with DLST (PubMed:32695416).</text>
</comment>
<comment type="interaction">
    <interactant intactId="EBI-11022401">
        <id>Q96HY7</id>
    </interactant>
    <interactant intactId="EBI-11991546">
        <id>O00327-8</id>
        <label>BMAL1</label>
    </interactant>
    <organismsDiffer>false</organismsDiffer>
    <experiments>3</experiments>
</comment>
<comment type="interaction">
    <interactant intactId="EBI-11022401">
        <id>Q96HY7</id>
    </interactant>
    <interactant intactId="EBI-12339509">
        <id>Q96LB9</id>
        <label>PGLYRP3</label>
    </interactant>
    <organismsDiffer>false</organismsDiffer>
    <experiments>2</experiments>
</comment>
<comment type="subcellular location">
    <subcellularLocation>
        <location evidence="8">Mitochondrion</location>
    </subcellularLocation>
</comment>
<comment type="disease" evidence="8">
    <disease id="DI-03672">
        <name>Charcot-Marie-Tooth disease, axonal, type 2Q</name>
        <acronym>CMT2Q</acronym>
        <description>An axonal form of Charcot-Marie-Tooth disease, a disorder of the peripheral nervous system, characterized by progressive weakness and atrophy, initially of the peroneal muscles and later of the distal muscles of the arms. Charcot-Marie-Tooth disease is classified in two main groups on the basis of electrophysiologic properties and histopathology: primary peripheral demyelinating neuropathies (designated CMT1 when they are dominantly inherited) and primary peripheral axonal neuropathies (CMT2). Neuropathies of the CMT2 group are characterized by signs of axonal degeneration in the absence of obvious myelin alterations, normal or slightly reduced nerve conduction velocities, and progressive distal muscle weakness and atrophy.</description>
        <dbReference type="MIM" id="615025"/>
    </disease>
    <text>The disease is caused by variants affecting the gene represented in this entry.</text>
</comment>
<comment type="disease" evidence="7 9 10 13 15">
    <disease id="DI-03673">
        <name>Alpha-aminoadipic and alpha-ketoadipic aciduria</name>
        <acronym>AAKAD</acronym>
        <description>An autosomal recessive metabolic disorder characterized by increased levels of 2-oxoadipate and 2-hydroxyadipate in the urine, and elevated 2-aminoadipate in the plasma. Patients can have mild to severe intellectual disability, muscular hypotonia, developmental delay, ataxia, and epilepsy. Most cases are asymptomatic.</description>
        <dbReference type="MIM" id="204750"/>
    </disease>
    <text>The disease is caused by variants affecting the gene represented in this entry.</text>
</comment>
<comment type="miscellaneous">
    <text evidence="17 18 23">The mitochondrial 2-oxoglutarate and 2-oxoadipate dehydrogenase complexes (OGDHC and OADHC, respectively) share their E2 (DLST) and E3 (dihydrolipoyl dehydrogenase or DLD) components, but the E1 component is specific to each complex (E1o and E1a, respectively).</text>
</comment>
<comment type="similarity">
    <text evidence="22">Belongs to the alpha-ketoglutarate dehydrogenase family.</text>
</comment>
<comment type="sequence caution" evidence="20">
    <conflict type="erroneous initiation">
        <sequence resource="EMBL-CDS" id="BAB13456"/>
    </conflict>
    <text>Extended N-terminus.</text>
</comment>
<comment type="sequence caution" evidence="20">
    <conflict type="miscellaneous discrepancy">
        <sequence resource="EMBL-CDS" id="BAB13456"/>
    </conflict>
    <text>Chimeric cDNA. C-terminal exons are derived from the neighboring gene.</text>
</comment>
<dbReference type="EC" id="1.2.4.-" evidence="12 14 21 25"/>
<dbReference type="EMBL" id="AC073160">
    <property type="status" value="NOT_ANNOTATED_CDS"/>
    <property type="molecule type" value="Genomic_DNA"/>
</dbReference>
<dbReference type="EMBL" id="BC002477">
    <property type="protein sequence ID" value="AAH02477.1"/>
    <property type="molecule type" value="mRNA"/>
</dbReference>
<dbReference type="EMBL" id="BC007955">
    <property type="protein sequence ID" value="AAH07955.1"/>
    <property type="molecule type" value="mRNA"/>
</dbReference>
<dbReference type="EMBL" id="AB046850">
    <property type="protein sequence ID" value="BAB13456.1"/>
    <property type="status" value="ALT_SEQ"/>
    <property type="molecule type" value="mRNA"/>
</dbReference>
<dbReference type="EMBL" id="CR749726">
    <property type="protein sequence ID" value="CAH18489.1"/>
    <property type="molecule type" value="mRNA"/>
</dbReference>
<dbReference type="CCDS" id="CCDS7087.1"/>
<dbReference type="PIR" id="T50617">
    <property type="entry name" value="T50617"/>
</dbReference>
<dbReference type="RefSeq" id="NP_061176.3">
    <property type="nucleotide sequence ID" value="NM_018706.6"/>
</dbReference>
<dbReference type="PDB" id="5RVW">
    <property type="method" value="X-ray"/>
    <property type="resolution" value="1.61 A"/>
    <property type="chains" value="A/B=45-919"/>
</dbReference>
<dbReference type="PDB" id="5RVX">
    <property type="method" value="X-ray"/>
    <property type="resolution" value="1.66 A"/>
    <property type="chains" value="A/B=45-919"/>
</dbReference>
<dbReference type="PDB" id="5RVY">
    <property type="method" value="X-ray"/>
    <property type="resolution" value="1.61 A"/>
    <property type="chains" value="A/B=45-919"/>
</dbReference>
<dbReference type="PDB" id="5RVZ">
    <property type="method" value="X-ray"/>
    <property type="resolution" value="1.98 A"/>
    <property type="chains" value="A/B=45-919"/>
</dbReference>
<dbReference type="PDB" id="5RW0">
    <property type="method" value="X-ray"/>
    <property type="resolution" value="1.67 A"/>
    <property type="chains" value="A/B=45-919"/>
</dbReference>
<dbReference type="PDB" id="5RW1">
    <property type="method" value="X-ray"/>
    <property type="resolution" value="1.52 A"/>
    <property type="chains" value="A/B=45-919"/>
</dbReference>
<dbReference type="PDB" id="6SY1">
    <property type="method" value="X-ray"/>
    <property type="resolution" value="1.87 A"/>
    <property type="chains" value="A/B=45-919"/>
</dbReference>
<dbReference type="PDB" id="6U3J">
    <property type="method" value="X-ray"/>
    <property type="resolution" value="2.25 A"/>
    <property type="chains" value="A/B=25-919"/>
</dbReference>
<dbReference type="PDBsum" id="5RVW"/>
<dbReference type="PDBsum" id="5RVX"/>
<dbReference type="PDBsum" id="5RVY"/>
<dbReference type="PDBsum" id="5RVZ"/>
<dbReference type="PDBsum" id="5RW0"/>
<dbReference type="PDBsum" id="5RW1"/>
<dbReference type="PDBsum" id="6SY1"/>
<dbReference type="PDBsum" id="6U3J"/>
<dbReference type="SMR" id="Q96HY7"/>
<dbReference type="BioGRID" id="120698">
    <property type="interactions" value="81"/>
</dbReference>
<dbReference type="FunCoup" id="Q96HY7">
    <property type="interactions" value="1009"/>
</dbReference>
<dbReference type="IntAct" id="Q96HY7">
    <property type="interactions" value="21"/>
</dbReference>
<dbReference type="MINT" id="Q96HY7"/>
<dbReference type="STRING" id="9606.ENSP00000263035"/>
<dbReference type="iPTMnet" id="Q96HY7"/>
<dbReference type="PhosphoSitePlus" id="Q96HY7"/>
<dbReference type="SwissPalm" id="Q96HY7"/>
<dbReference type="BioMuta" id="DHTKD1"/>
<dbReference type="DMDM" id="296434477"/>
<dbReference type="jPOST" id="Q96HY7"/>
<dbReference type="MassIVE" id="Q96HY7"/>
<dbReference type="PaxDb" id="9606-ENSP00000263035"/>
<dbReference type="PeptideAtlas" id="Q96HY7"/>
<dbReference type="ProteomicsDB" id="76796"/>
<dbReference type="Pumba" id="Q96HY7"/>
<dbReference type="ABCD" id="Q96HY7">
    <property type="antibodies" value="1 sequenced antibody"/>
</dbReference>
<dbReference type="Antibodypedia" id="24629">
    <property type="antibodies" value="128 antibodies from 23 providers"/>
</dbReference>
<dbReference type="DNASU" id="55526"/>
<dbReference type="Ensembl" id="ENST00000263035.9">
    <property type="protein sequence ID" value="ENSP00000263035.4"/>
    <property type="gene ID" value="ENSG00000181192.12"/>
</dbReference>
<dbReference type="GeneID" id="55526"/>
<dbReference type="KEGG" id="hsa:55526"/>
<dbReference type="MANE-Select" id="ENST00000263035.9">
    <property type="protein sequence ID" value="ENSP00000263035.4"/>
    <property type="RefSeq nucleotide sequence ID" value="NM_018706.7"/>
    <property type="RefSeq protein sequence ID" value="NP_061176.4"/>
</dbReference>
<dbReference type="UCSC" id="uc001ild.6">
    <property type="organism name" value="human"/>
</dbReference>
<dbReference type="AGR" id="HGNC:23537"/>
<dbReference type="CTD" id="55526"/>
<dbReference type="DisGeNET" id="55526"/>
<dbReference type="GeneCards" id="DHTKD1"/>
<dbReference type="GeneReviews" id="DHTKD1"/>
<dbReference type="HGNC" id="HGNC:23537">
    <property type="gene designation" value="DHTKD1"/>
</dbReference>
<dbReference type="HPA" id="ENSG00000181192">
    <property type="expression patterns" value="Tissue enhanced (liver)"/>
</dbReference>
<dbReference type="MalaCards" id="DHTKD1"/>
<dbReference type="MIM" id="204750">
    <property type="type" value="phenotype"/>
</dbReference>
<dbReference type="MIM" id="614984">
    <property type="type" value="gene"/>
</dbReference>
<dbReference type="MIM" id="615025">
    <property type="type" value="phenotype"/>
</dbReference>
<dbReference type="neXtProt" id="NX_Q96HY7"/>
<dbReference type="OpenTargets" id="ENSG00000181192"/>
<dbReference type="Orphanet" id="79154">
    <property type="disease" value="2-aminoadipic 2-oxoadipic aciduria"/>
</dbReference>
<dbReference type="Orphanet" id="329258">
    <property type="disease" value="Autosomal dominant Charcot-Marie-Tooth disease type 2Q"/>
</dbReference>
<dbReference type="PharmGKB" id="PA134962952"/>
<dbReference type="VEuPathDB" id="HostDB:ENSG00000181192"/>
<dbReference type="eggNOG" id="KOG0451">
    <property type="taxonomic scope" value="Eukaryota"/>
</dbReference>
<dbReference type="GeneTree" id="ENSGT00950000183125"/>
<dbReference type="HOGENOM" id="CLU_004709_0_0_1"/>
<dbReference type="InParanoid" id="Q96HY7"/>
<dbReference type="OMA" id="PAQYYHV"/>
<dbReference type="OrthoDB" id="413077at2759"/>
<dbReference type="PAN-GO" id="Q96HY7">
    <property type="GO annotations" value="0 GO annotations based on evolutionary models"/>
</dbReference>
<dbReference type="PhylomeDB" id="Q96HY7"/>
<dbReference type="TreeFam" id="TF314198"/>
<dbReference type="BioCyc" id="MetaCyc:HS11585-MONOMER"/>
<dbReference type="BRENDA" id="1.2.1.105">
    <property type="organism ID" value="2681"/>
</dbReference>
<dbReference type="PathwayCommons" id="Q96HY7"/>
<dbReference type="Reactome" id="R-HSA-9858328">
    <property type="pathway name" value="OADH complex synthesizes glutaryl-CoA from 2-OA"/>
</dbReference>
<dbReference type="SignaLink" id="Q96HY7"/>
<dbReference type="BioGRID-ORCS" id="55526">
    <property type="hits" value="9 hits in 1159 CRISPR screens"/>
</dbReference>
<dbReference type="ChiTaRS" id="DHTKD1">
    <property type="organism name" value="human"/>
</dbReference>
<dbReference type="GenomeRNAi" id="55526"/>
<dbReference type="Pharos" id="Q96HY7">
    <property type="development level" value="Tbio"/>
</dbReference>
<dbReference type="PRO" id="PR:Q96HY7"/>
<dbReference type="Proteomes" id="UP000005640">
    <property type="component" value="Chromosome 10"/>
</dbReference>
<dbReference type="RNAct" id="Q96HY7">
    <property type="molecule type" value="protein"/>
</dbReference>
<dbReference type="Bgee" id="ENSG00000181192">
    <property type="expression patterns" value="Expressed in liver and 195 other cell types or tissues"/>
</dbReference>
<dbReference type="ExpressionAtlas" id="Q96HY7">
    <property type="expression patterns" value="baseline and differential"/>
</dbReference>
<dbReference type="GO" id="GO:0005759">
    <property type="term" value="C:mitochondrial matrix"/>
    <property type="evidence" value="ECO:0000304"/>
    <property type="project" value="Reactome"/>
</dbReference>
<dbReference type="GO" id="GO:0005739">
    <property type="term" value="C:mitochondrion"/>
    <property type="evidence" value="ECO:0000314"/>
    <property type="project" value="UniProtKB"/>
</dbReference>
<dbReference type="GO" id="GO:0160167">
    <property type="term" value="C:oxoadipate dehydrogenase complex"/>
    <property type="evidence" value="ECO:0000314"/>
    <property type="project" value="FlyBase"/>
</dbReference>
<dbReference type="GO" id="GO:0160166">
    <property type="term" value="F:2-oxoadipate dehydrogenase activity"/>
    <property type="evidence" value="ECO:0000314"/>
    <property type="project" value="FlyBase"/>
</dbReference>
<dbReference type="GO" id="GO:0004591">
    <property type="term" value="F:oxoglutarate dehydrogenase (succinyl-transferring) activity"/>
    <property type="evidence" value="ECO:0007669"/>
    <property type="project" value="UniProtKB-EC"/>
</dbReference>
<dbReference type="GO" id="GO:0030976">
    <property type="term" value="F:thiamine pyrophosphate binding"/>
    <property type="evidence" value="ECO:0007669"/>
    <property type="project" value="InterPro"/>
</dbReference>
<dbReference type="GO" id="GO:0006091">
    <property type="term" value="P:generation of precursor metabolites and energy"/>
    <property type="evidence" value="ECO:0000315"/>
    <property type="project" value="UniProtKB"/>
</dbReference>
<dbReference type="GO" id="GO:0006096">
    <property type="term" value="P:glycolytic process"/>
    <property type="evidence" value="ECO:0007669"/>
    <property type="project" value="UniProtKB-KW"/>
</dbReference>
<dbReference type="GO" id="GO:0002244">
    <property type="term" value="P:hematopoietic progenitor cell differentiation"/>
    <property type="evidence" value="ECO:0007669"/>
    <property type="project" value="Ensembl"/>
</dbReference>
<dbReference type="CDD" id="cd02016">
    <property type="entry name" value="TPP_E1_OGDC_like"/>
    <property type="match status" value="1"/>
</dbReference>
<dbReference type="FunFam" id="3.40.50.11610:FF:000005">
    <property type="entry name" value="Probable 2-oxoglutarate dehydrogenase E1 component DHKTD1, mitochondrial"/>
    <property type="match status" value="1"/>
</dbReference>
<dbReference type="FunFam" id="3.40.50.970:FF:000034">
    <property type="entry name" value="Probable 2-oxoglutarate dehydrogenase E1 component DHKTD1, mitochondrial"/>
    <property type="match status" value="1"/>
</dbReference>
<dbReference type="FunFam" id="1.10.287.1150:FF:000005">
    <property type="entry name" value="probable 2-oxoglutarate dehydrogenase E1 component DHKTD1, mitochondrial"/>
    <property type="match status" value="1"/>
</dbReference>
<dbReference type="Gene3D" id="3.40.50.12470">
    <property type="match status" value="1"/>
</dbReference>
<dbReference type="Gene3D" id="3.40.50.970">
    <property type="match status" value="1"/>
</dbReference>
<dbReference type="Gene3D" id="3.40.50.11610">
    <property type="entry name" value="Multifunctional 2-oxoglutarate metabolism enzyme, C-terminal domain"/>
    <property type="match status" value="1"/>
</dbReference>
<dbReference type="Gene3D" id="1.10.287.1150">
    <property type="entry name" value="TPP helical domain"/>
    <property type="match status" value="1"/>
</dbReference>
<dbReference type="InterPro" id="IPR011603">
    <property type="entry name" value="2oxoglutarate_DH_E1"/>
</dbReference>
<dbReference type="InterPro" id="IPR001017">
    <property type="entry name" value="DH_E1"/>
</dbReference>
<dbReference type="InterPro" id="IPR042179">
    <property type="entry name" value="KGD_C_sf"/>
</dbReference>
<dbReference type="InterPro" id="IPR031717">
    <property type="entry name" value="ODO-1/KGD_C"/>
</dbReference>
<dbReference type="InterPro" id="IPR029061">
    <property type="entry name" value="THDP-binding"/>
</dbReference>
<dbReference type="InterPro" id="IPR005475">
    <property type="entry name" value="Transketolase-like_Pyr-bd"/>
</dbReference>
<dbReference type="NCBIfam" id="TIGR00239">
    <property type="entry name" value="2oxo_dh_E1"/>
    <property type="match status" value="1"/>
</dbReference>
<dbReference type="NCBIfam" id="NF006914">
    <property type="entry name" value="PRK09404.1"/>
    <property type="match status" value="1"/>
</dbReference>
<dbReference type="NCBIfam" id="NF008907">
    <property type="entry name" value="PRK12270.1"/>
    <property type="match status" value="1"/>
</dbReference>
<dbReference type="PANTHER" id="PTHR23152:SF4">
    <property type="entry name" value="2-OXOADIPATE DEHYDROGENASE COMPLEX COMPONENT E1"/>
    <property type="match status" value="1"/>
</dbReference>
<dbReference type="PANTHER" id="PTHR23152">
    <property type="entry name" value="2-OXOGLUTARATE DEHYDROGENASE"/>
    <property type="match status" value="1"/>
</dbReference>
<dbReference type="Pfam" id="PF00676">
    <property type="entry name" value="E1_dh"/>
    <property type="match status" value="1"/>
</dbReference>
<dbReference type="Pfam" id="PF16870">
    <property type="entry name" value="OxoGdeHyase_C"/>
    <property type="match status" value="1"/>
</dbReference>
<dbReference type="Pfam" id="PF02779">
    <property type="entry name" value="Transket_pyr"/>
    <property type="match status" value="1"/>
</dbReference>
<dbReference type="PIRSF" id="PIRSF000157">
    <property type="entry name" value="Oxoglu_dh_E1"/>
    <property type="match status" value="1"/>
</dbReference>
<dbReference type="SMART" id="SM00861">
    <property type="entry name" value="Transket_pyr"/>
    <property type="match status" value="1"/>
</dbReference>
<dbReference type="SUPFAM" id="SSF52518">
    <property type="entry name" value="Thiamin diphosphate-binding fold (THDP-binding)"/>
    <property type="match status" value="2"/>
</dbReference>
<proteinExistence type="evidence at protein level"/>
<evidence type="ECO:0000250" key="1">
    <source>
        <dbReference type="UniProtKB" id="A2ATU0"/>
    </source>
</evidence>
<evidence type="ECO:0000255" key="2"/>
<evidence type="ECO:0000256" key="3">
    <source>
        <dbReference type="SAM" id="MobiDB-lite"/>
    </source>
</evidence>
<evidence type="ECO:0000269" key="4">
    <source>
    </source>
</evidence>
<evidence type="ECO:0000269" key="5">
    <source>
    </source>
</evidence>
<evidence type="ECO:0000269" key="6">
    <source>
    </source>
</evidence>
<evidence type="ECO:0000269" key="7">
    <source>
    </source>
</evidence>
<evidence type="ECO:0000269" key="8">
    <source>
    </source>
</evidence>
<evidence type="ECO:0000269" key="9">
    <source>
    </source>
</evidence>
<evidence type="ECO:0000269" key="10">
    <source>
    </source>
</evidence>
<evidence type="ECO:0000269" key="11">
    <source>
    </source>
</evidence>
<evidence type="ECO:0000269" key="12">
    <source>
    </source>
</evidence>
<evidence type="ECO:0000269" key="13">
    <source>
    </source>
</evidence>
<evidence type="ECO:0000269" key="14">
    <source>
    </source>
</evidence>
<evidence type="ECO:0000269" key="15">
    <source>
    </source>
</evidence>
<evidence type="ECO:0000303" key="16">
    <source>
    </source>
</evidence>
<evidence type="ECO:0000303" key="17">
    <source>
    </source>
</evidence>
<evidence type="ECO:0000303" key="18">
    <source>
    </source>
</evidence>
<evidence type="ECO:0000303" key="19">
    <source>
    </source>
</evidence>
<evidence type="ECO:0000305" key="20"/>
<evidence type="ECO:0000305" key="21">
    <source>
    </source>
</evidence>
<evidence type="ECO:0000305" key="22">
    <source>
    </source>
</evidence>
<evidence type="ECO:0000305" key="23">
    <source>
    </source>
</evidence>
<evidence type="ECO:0000305" key="24">
    <source>
    </source>
</evidence>
<evidence type="ECO:0000305" key="25">
    <source>
    </source>
</evidence>
<evidence type="ECO:0007829" key="26">
    <source>
        <dbReference type="PDB" id="5RVZ"/>
    </source>
</evidence>
<evidence type="ECO:0007829" key="27">
    <source>
        <dbReference type="PDB" id="5RW1"/>
    </source>
</evidence>
<reference key="1">
    <citation type="journal article" date="2004" name="Nature">
        <title>The DNA sequence and comparative analysis of human chromosome 10.</title>
        <authorList>
            <person name="Deloukas P."/>
            <person name="Earthrowl M.E."/>
            <person name="Grafham D.V."/>
            <person name="Rubenfield M."/>
            <person name="French L."/>
            <person name="Steward C.A."/>
            <person name="Sims S.K."/>
            <person name="Jones M.C."/>
            <person name="Searle S."/>
            <person name="Scott C."/>
            <person name="Howe K."/>
            <person name="Hunt S.E."/>
            <person name="Andrews T.D."/>
            <person name="Gilbert J.G.R."/>
            <person name="Swarbreck D."/>
            <person name="Ashurst J.L."/>
            <person name="Taylor A."/>
            <person name="Battles J."/>
            <person name="Bird C.P."/>
            <person name="Ainscough R."/>
            <person name="Almeida J.P."/>
            <person name="Ashwell R.I.S."/>
            <person name="Ambrose K.D."/>
            <person name="Babbage A.K."/>
            <person name="Bagguley C.L."/>
            <person name="Bailey J."/>
            <person name="Banerjee R."/>
            <person name="Bates K."/>
            <person name="Beasley H."/>
            <person name="Bray-Allen S."/>
            <person name="Brown A.J."/>
            <person name="Brown J.Y."/>
            <person name="Burford D.C."/>
            <person name="Burrill W."/>
            <person name="Burton J."/>
            <person name="Cahill P."/>
            <person name="Camire D."/>
            <person name="Carter N.P."/>
            <person name="Chapman J.C."/>
            <person name="Clark S.Y."/>
            <person name="Clarke G."/>
            <person name="Clee C.M."/>
            <person name="Clegg S."/>
            <person name="Corby N."/>
            <person name="Coulson A."/>
            <person name="Dhami P."/>
            <person name="Dutta I."/>
            <person name="Dunn M."/>
            <person name="Faulkner L."/>
            <person name="Frankish A."/>
            <person name="Frankland J.A."/>
            <person name="Garner P."/>
            <person name="Garnett J."/>
            <person name="Gribble S."/>
            <person name="Griffiths C."/>
            <person name="Grocock R."/>
            <person name="Gustafson E."/>
            <person name="Hammond S."/>
            <person name="Harley J.L."/>
            <person name="Hart E."/>
            <person name="Heath P.D."/>
            <person name="Ho T.P."/>
            <person name="Hopkins B."/>
            <person name="Horne J."/>
            <person name="Howden P.J."/>
            <person name="Huckle E."/>
            <person name="Hynds C."/>
            <person name="Johnson C."/>
            <person name="Johnson D."/>
            <person name="Kana A."/>
            <person name="Kay M."/>
            <person name="Kimberley A.M."/>
            <person name="Kershaw J.K."/>
            <person name="Kokkinaki M."/>
            <person name="Laird G.K."/>
            <person name="Lawlor S."/>
            <person name="Lee H.M."/>
            <person name="Leongamornlert D.A."/>
            <person name="Laird G."/>
            <person name="Lloyd C."/>
            <person name="Lloyd D.M."/>
            <person name="Loveland J."/>
            <person name="Lovell J."/>
            <person name="McLaren S."/>
            <person name="McLay K.E."/>
            <person name="McMurray A."/>
            <person name="Mashreghi-Mohammadi M."/>
            <person name="Matthews L."/>
            <person name="Milne S."/>
            <person name="Nickerson T."/>
            <person name="Nguyen M."/>
            <person name="Overton-Larty E."/>
            <person name="Palmer S.A."/>
            <person name="Pearce A.V."/>
            <person name="Peck A.I."/>
            <person name="Pelan S."/>
            <person name="Phillimore B."/>
            <person name="Porter K."/>
            <person name="Rice C.M."/>
            <person name="Rogosin A."/>
            <person name="Ross M.T."/>
            <person name="Sarafidou T."/>
            <person name="Sehra H.K."/>
            <person name="Shownkeen R."/>
            <person name="Skuce C.D."/>
            <person name="Smith M."/>
            <person name="Standring L."/>
            <person name="Sycamore N."/>
            <person name="Tester J."/>
            <person name="Thorpe A."/>
            <person name="Torcasso W."/>
            <person name="Tracey A."/>
            <person name="Tromans A."/>
            <person name="Tsolas J."/>
            <person name="Wall M."/>
            <person name="Walsh J."/>
            <person name="Wang H."/>
            <person name="Weinstock K."/>
            <person name="West A.P."/>
            <person name="Willey D.L."/>
            <person name="Whitehead S.L."/>
            <person name="Wilming L."/>
            <person name="Wray P.W."/>
            <person name="Young L."/>
            <person name="Chen Y."/>
            <person name="Lovering R.C."/>
            <person name="Moschonas N.K."/>
            <person name="Siebert R."/>
            <person name="Fechtel K."/>
            <person name="Bentley D."/>
            <person name="Durbin R.M."/>
            <person name="Hubbard T."/>
            <person name="Doucette-Stamm L."/>
            <person name="Beck S."/>
            <person name="Smith D.R."/>
            <person name="Rogers J."/>
        </authorList>
    </citation>
    <scope>NUCLEOTIDE SEQUENCE [LARGE SCALE GENOMIC DNA]</scope>
</reference>
<reference key="2">
    <citation type="journal article" date="2004" name="Genome Res.">
        <title>The status, quality, and expansion of the NIH full-length cDNA project: the Mammalian Gene Collection (MGC).</title>
        <authorList>
            <consortium name="The MGC Project Team"/>
        </authorList>
    </citation>
    <scope>NUCLEOTIDE SEQUENCE [LARGE SCALE MRNA]</scope>
    <scope>VARIANTS LEU-20; ASP-272; LEU-308 AND MET-607</scope>
    <source>
        <tissue>Kidney</tissue>
        <tissue>Uterus</tissue>
    </source>
</reference>
<reference key="3">
    <citation type="journal article" date="2000" name="DNA Res.">
        <title>Prediction of the coding sequences of unidentified human genes. XVIII. The complete sequences of 100 new cDNA clones from brain which code for large proteins in vitro.</title>
        <authorList>
            <person name="Nagase T."/>
            <person name="Kikuno R."/>
            <person name="Nakayama M."/>
            <person name="Hirosawa M."/>
            <person name="Ohara O."/>
        </authorList>
    </citation>
    <scope>NUCLEOTIDE SEQUENCE [LARGE SCALE MRNA] OF 1-886</scope>
    <scope>VARIANTS LEU-20; ASP-272 AND MET-607</scope>
    <source>
        <tissue>Brain</tissue>
    </source>
</reference>
<reference key="4">
    <citation type="journal article" date="2007" name="BMC Genomics">
        <title>The full-ORF clone resource of the German cDNA consortium.</title>
        <authorList>
            <person name="Bechtel S."/>
            <person name="Rosenfelder H."/>
            <person name="Duda A."/>
            <person name="Schmidt C.P."/>
            <person name="Ernst U."/>
            <person name="Wellenreuther R."/>
            <person name="Mehrle A."/>
            <person name="Schuster C."/>
            <person name="Bahr A."/>
            <person name="Bloecker H."/>
            <person name="Heubner D."/>
            <person name="Hoerlein A."/>
            <person name="Michel G."/>
            <person name="Wedler H."/>
            <person name="Koehrer K."/>
            <person name="Ottenwaelder B."/>
            <person name="Poustka A."/>
            <person name="Wiemann S."/>
            <person name="Schupp I."/>
        </authorList>
    </citation>
    <scope>NUCLEOTIDE SEQUENCE [LARGE SCALE MRNA] OF 380-919</scope>
    <scope>VARIANT MET-607</scope>
    <source>
        <tissue>Melanoma</tissue>
    </source>
</reference>
<reference key="5">
    <citation type="journal article" date="2012" name="Am. J. Hum. Genet.">
        <title>A nonsense mutation in DHTKD1 causes Charcot-Marie-Tooth disease type 2 in a large Chinese pedigree.</title>
        <authorList>
            <person name="Xu W.Y."/>
            <person name="Gu M.M."/>
            <person name="Sun L.H."/>
            <person name="Guo W.T."/>
            <person name="Zhu H.B."/>
            <person name="Ma J.F."/>
            <person name="Yuan W.T."/>
            <person name="Kuang Y."/>
            <person name="Ji B.J."/>
            <person name="Wu X.L."/>
            <person name="Chen Y."/>
            <person name="Zhang H.X."/>
            <person name="Sun F.T."/>
            <person name="Huang W."/>
            <person name="Huang L."/>
            <person name="Chen S.D."/>
            <person name="Wang Z.G."/>
        </authorList>
    </citation>
    <scope>INVOLVEMENT IN CMT2Q</scope>
    <scope>SUBCELLULAR LOCATION</scope>
</reference>
<reference key="6">
    <citation type="journal article" date="2018" name="Free Radic. Biol. Med.">
        <title>The mitochondrial 2-oxoadipate and 2-oxoglutarate dehydrogenase complexes share their E2 and E3 components for their function and both generate reactive oxygen species.</title>
        <authorList>
            <person name="Nemeria N.S."/>
            <person name="Gerfen G."/>
            <person name="Nareddy P.R."/>
            <person name="Yang L."/>
            <person name="Zhang X."/>
            <person name="Szostak M."/>
            <person name="Jordan F."/>
        </authorList>
    </citation>
    <scope>FUNCTION</scope>
    <scope>CATALYTIC ACTIVITY</scope>
    <scope>BIOPHYSICOCHEMICAL PROPERTIES</scope>
    <scope>PATHWAY</scope>
</reference>
<reference key="7">
    <citation type="journal article" date="2018" name="Biochim. Biophys. Acta">
        <title>Evidence for functional and regulatory cross-talk between the tricarboxylic acid cycle 2-oxoglutarate dehydrogenase complex and 2-oxoadipate dehydrogenase on the l-lysine, l-hydroxylysine and l-tryptophan degradation pathways from studies in vitro.</title>
        <authorList>
            <person name="Nemeria N.S."/>
            <person name="Gerfen G."/>
            <person name="Yang L."/>
            <person name="Zhang X."/>
            <person name="Jordan F."/>
        </authorList>
    </citation>
    <scope>FUNCTION</scope>
    <scope>BIOPHYSICOCHEMICAL PROPERTIES</scope>
    <scope>PATHWAY</scope>
    <scope>SUBUNIT</scope>
</reference>
<reference key="8">
    <citation type="journal article" date="2020" name="J. Biol. Chem.">
        <title>Structure-function analyses of the G729R 2-oxoadipate dehydrogenase genetic variant associated with a disorder of l-lysine metabolism.</title>
        <authorList>
            <person name="Zhang X."/>
            <person name="Nemeria N.S."/>
            <person name="Leandro J."/>
            <person name="Houten S."/>
            <person name="Lazarus M."/>
            <person name="Gerfen G."/>
            <person name="Ozohanics O."/>
            <person name="Ambrus A."/>
            <person name="Nagy B."/>
            <person name="Brukh R."/>
            <person name="Jordan F."/>
        </authorList>
    </citation>
    <scope>FUNCTION</scope>
    <scope>BIOPHYSICOCHEMICAL PROPERTIES</scope>
    <scope>PATHWAY</scope>
    <scope>VARIANTS AAKAD CYS-715 AND ARG-729</scope>
    <scope>CHARACTERIZATION OF VARIANT AAKAD ARG-729</scope>
</reference>
<reference key="9">
    <citation type="journal article" date="2020" name="ACS Chem. Biol.">
        <title>Inhibition and Crystal Structure of the Human DHTKD1-Thiamin Diphosphate Complex.</title>
        <authorList>
            <person name="Leandro J."/>
            <person name="Khamrui S."/>
            <person name="Wang H."/>
            <person name="Suebsuwong C."/>
            <person name="Nemeria N.S."/>
            <person name="Huynh K."/>
            <person name="Moustakim M."/>
            <person name="Secor C."/>
            <person name="Wang M."/>
            <person name="Dodatko T."/>
            <person name="Stauffer B."/>
            <person name="Wilson C.G."/>
            <person name="Yu C."/>
            <person name="Arkin M.R."/>
            <person name="Jordan F."/>
            <person name="Sanchez R."/>
            <person name="DeVita R.J."/>
            <person name="Lazarus M.B."/>
            <person name="Houten S.M."/>
        </authorList>
    </citation>
    <scope>FUNCTION</scope>
    <scope>CATALYTIC ACTIVITY</scope>
    <scope>PATHWAY</scope>
</reference>
<reference key="10">
    <citation type="journal article" date="2020" name="IUCrJ">
        <title>Crystal structure and interaction studies of human DHTKD1 provide insight into a mitochondrial megacomplex in lysine catabolism.</title>
        <authorList>
            <person name="Bezerra G.A."/>
            <person name="Foster W.R."/>
            <person name="Bailey H.J."/>
            <person name="Hicks K.G."/>
            <person name="Sauer S.W."/>
            <person name="Dimitrov B."/>
            <person name="McCorvie T.J."/>
            <person name="Okun J.G."/>
            <person name="Rutter J."/>
            <person name="Koelker S."/>
            <person name="Yue W.W."/>
        </authorList>
    </citation>
    <scope>FUNCTION</scope>
    <scope>CATALYTIC ACTIVITY</scope>
    <scope>BIOPHYSICOCHEMICAL PROPERTIES</scope>
    <scope>PATHWAY</scope>
    <scope>COFACTOR</scope>
    <scope>X-RAY CRYSTALLOGRAPHY (1.9 ANGSTROMS) OF 45-919</scope>
    <scope>INTERACTION WITH DLST</scope>
    <scope>CHARACTERIZATION OF VARIANTS AAKAD CYS-715 AND LEU-773</scope>
</reference>
<reference key="11">
    <citation type="journal article" date="2014" name="J. Proteomics">
        <title>An enzyme assisted RP-RPLC approach for in-depth analysis of human liver phosphoproteome.</title>
        <authorList>
            <person name="Bian Y."/>
            <person name="Song C."/>
            <person name="Cheng K."/>
            <person name="Dong M."/>
            <person name="Wang F."/>
            <person name="Huang J."/>
            <person name="Sun D."/>
            <person name="Wang L."/>
            <person name="Ye M."/>
            <person name="Zou H."/>
        </authorList>
    </citation>
    <scope>IDENTIFICATION BY MASS SPECTROMETRY [LARGE SCALE ANALYSIS]</scope>
    <source>
        <tissue>Liver</tissue>
    </source>
</reference>
<reference key="12">
    <citation type="journal article" date="2015" name="Proteomics">
        <title>N-terminome analysis of the human mitochondrial proteome.</title>
        <authorList>
            <person name="Vaca Jacome A.S."/>
            <person name="Rabilloud T."/>
            <person name="Schaeffer-Reiss C."/>
            <person name="Rompais M."/>
            <person name="Ayoub D."/>
            <person name="Lane L."/>
            <person name="Bairoch A."/>
            <person name="Van Dorsselaer A."/>
            <person name="Carapito C."/>
        </authorList>
    </citation>
    <scope>IDENTIFICATION BY MASS SPECTROMETRY [LARGE SCALE ANALYSIS]</scope>
</reference>
<reference key="13">
    <citation type="journal article" date="2012" name="Am. J. Hum. Genet.">
        <title>DHTKD1 mutations cause 2-aminoadipic and 2-oxoadipic aciduria.</title>
        <authorList>
            <person name="Danhauser K."/>
            <person name="Sauer S.W."/>
            <person name="Haack T.B."/>
            <person name="Wieland T."/>
            <person name="Staufner C."/>
            <person name="Graf E."/>
            <person name="Zschocke J."/>
            <person name="Strom T.M."/>
            <person name="Traub T."/>
            <person name="Okun J.G."/>
            <person name="Meitinger T."/>
            <person name="Hoffmann G.F."/>
            <person name="Prokisch H."/>
            <person name="Koelker S."/>
        </authorList>
    </citation>
    <scope>VARIANT AAKAD ARG-729</scope>
</reference>
<reference key="14">
    <citation type="journal article" date="2015" name="J. Inherit. Metab. Dis.">
        <title>Genetic basis of alpha-aminoadipic and alpha-ketoadipic aciduria.</title>
        <authorList>
            <person name="Hagen J."/>
            <person name="te Brinke H."/>
            <person name="Wanders R.J."/>
            <person name="Knegt A.C."/>
            <person name="Oussoren E."/>
            <person name="Hoogeboom A.J."/>
            <person name="Ruijter G.J."/>
            <person name="Becker D."/>
            <person name="Schwab K.O."/>
            <person name="Franke I."/>
            <person name="Duran M."/>
            <person name="Waterham H.R."/>
            <person name="Sass J.O."/>
            <person name="Houten S.M."/>
        </authorList>
    </citation>
    <scope>VARIANTS AAKAD GLY-234; 437-GLU--ALA-919 DEL; GLN-455; LEU-773 AND PRO-777</scope>
</reference>
<reference key="15">
    <citation type="journal article" date="2016" name="JIMD Rep.">
        <title>New Cases of DHTKD1 Mutations in Patients with 2-Ketoadipic Aciduria.</title>
        <authorList>
            <person name="Stiles A.R."/>
            <person name="Venturoni L."/>
            <person name="Mucci G."/>
            <person name="Elbalalesy N."/>
            <person name="Woontner M."/>
            <person name="Goodman S."/>
            <person name="Abdenur J.E."/>
        </authorList>
    </citation>
    <scope>VARIANTS AAKAD HIS-305; CYS-715 AND ARG-729</scope>
</reference>
<organism>
    <name type="scientific">Homo sapiens</name>
    <name type="common">Human</name>
    <dbReference type="NCBI Taxonomy" id="9606"/>
    <lineage>
        <taxon>Eukaryota</taxon>
        <taxon>Metazoa</taxon>
        <taxon>Chordata</taxon>
        <taxon>Craniata</taxon>
        <taxon>Vertebrata</taxon>
        <taxon>Euteleostomi</taxon>
        <taxon>Mammalia</taxon>
        <taxon>Eutheria</taxon>
        <taxon>Euarchontoglires</taxon>
        <taxon>Primates</taxon>
        <taxon>Haplorrhini</taxon>
        <taxon>Catarrhini</taxon>
        <taxon>Hominidae</taxon>
        <taxon>Homo</taxon>
    </lineage>
</organism>